<evidence type="ECO:0000255" key="1">
    <source>
        <dbReference type="HAMAP-Rule" id="MF_01576"/>
    </source>
</evidence>
<feature type="chain" id="PRO_0000268389" description="Bifunctional protein FolD">
    <location>
        <begin position="1"/>
        <end position="284"/>
    </location>
</feature>
<feature type="binding site" evidence="1">
    <location>
        <begin position="164"/>
        <end position="166"/>
    </location>
    <ligand>
        <name>NADP(+)</name>
        <dbReference type="ChEBI" id="CHEBI:58349"/>
    </ligand>
</feature>
<feature type="binding site" evidence="1">
    <location>
        <position position="189"/>
    </location>
    <ligand>
        <name>NADP(+)</name>
        <dbReference type="ChEBI" id="CHEBI:58349"/>
    </ligand>
</feature>
<reference key="1">
    <citation type="journal article" date="2001" name="Science">
        <title>Comparative genomics of Listeria species.</title>
        <authorList>
            <person name="Glaser P."/>
            <person name="Frangeul L."/>
            <person name="Buchrieser C."/>
            <person name="Rusniok C."/>
            <person name="Amend A."/>
            <person name="Baquero F."/>
            <person name="Berche P."/>
            <person name="Bloecker H."/>
            <person name="Brandt P."/>
            <person name="Chakraborty T."/>
            <person name="Charbit A."/>
            <person name="Chetouani F."/>
            <person name="Couve E."/>
            <person name="de Daruvar A."/>
            <person name="Dehoux P."/>
            <person name="Domann E."/>
            <person name="Dominguez-Bernal G."/>
            <person name="Duchaud E."/>
            <person name="Durant L."/>
            <person name="Dussurget O."/>
            <person name="Entian K.-D."/>
            <person name="Fsihi H."/>
            <person name="Garcia-del Portillo F."/>
            <person name="Garrido P."/>
            <person name="Gautier L."/>
            <person name="Goebel W."/>
            <person name="Gomez-Lopez N."/>
            <person name="Hain T."/>
            <person name="Hauf J."/>
            <person name="Jackson D."/>
            <person name="Jones L.-M."/>
            <person name="Kaerst U."/>
            <person name="Kreft J."/>
            <person name="Kuhn M."/>
            <person name="Kunst F."/>
            <person name="Kurapkat G."/>
            <person name="Madueno E."/>
            <person name="Maitournam A."/>
            <person name="Mata Vicente J."/>
            <person name="Ng E."/>
            <person name="Nedjari H."/>
            <person name="Nordsiek G."/>
            <person name="Novella S."/>
            <person name="de Pablos B."/>
            <person name="Perez-Diaz J.-C."/>
            <person name="Purcell R."/>
            <person name="Remmel B."/>
            <person name="Rose M."/>
            <person name="Schlueter T."/>
            <person name="Simoes N."/>
            <person name="Tierrez A."/>
            <person name="Vazquez-Boland J.-A."/>
            <person name="Voss H."/>
            <person name="Wehland J."/>
            <person name="Cossart P."/>
        </authorList>
    </citation>
    <scope>NUCLEOTIDE SEQUENCE [LARGE SCALE GENOMIC DNA]</scope>
    <source>
        <strain>ATCC BAA-679 / EGD-e</strain>
    </source>
</reference>
<sequence length="284" mass="30907">MGEIIDGKKLAKEIQEKVTREVAELVKEGKQPGLAVVLVGDNQASRTYVRNKQKRTEEAGMKSVLIELPENVTEEKLLSVVEELNEDKTIHGILVQLPLPEHISEEKVIDTISFDKDVDGFHPVNVGNLFIGKDSFVPCTPAGIIELIKSTGTQIEGKRAVVIGRSNIVGKPVAQLLLNENATVTIAHSRTKDLPQVAKEADILVVATGLAKFVKKDYIKPGAIVIDVGMDRDENNKLCGDVDFDDVVQEAGFITPVPGGVGPMTITMLLANTLKAAKRIWKMN</sequence>
<accession>Q8Y7C5</accession>
<gene>
    <name evidence="1" type="primary">folD</name>
    <name type="ordered locus">lmo1360</name>
</gene>
<proteinExistence type="inferred from homology"/>
<comment type="function">
    <text evidence="1">Catalyzes the oxidation of 5,10-methylenetetrahydrofolate to 5,10-methenyltetrahydrofolate and then the hydrolysis of 5,10-methenyltetrahydrofolate to 10-formyltetrahydrofolate.</text>
</comment>
<comment type="catalytic activity">
    <reaction evidence="1">
        <text>(6R)-5,10-methylene-5,6,7,8-tetrahydrofolate + NADP(+) = (6R)-5,10-methenyltetrahydrofolate + NADPH</text>
        <dbReference type="Rhea" id="RHEA:22812"/>
        <dbReference type="ChEBI" id="CHEBI:15636"/>
        <dbReference type="ChEBI" id="CHEBI:57455"/>
        <dbReference type="ChEBI" id="CHEBI:57783"/>
        <dbReference type="ChEBI" id="CHEBI:58349"/>
        <dbReference type="EC" id="1.5.1.5"/>
    </reaction>
</comment>
<comment type="catalytic activity">
    <reaction evidence="1">
        <text>(6R)-5,10-methenyltetrahydrofolate + H2O = (6R)-10-formyltetrahydrofolate + H(+)</text>
        <dbReference type="Rhea" id="RHEA:23700"/>
        <dbReference type="ChEBI" id="CHEBI:15377"/>
        <dbReference type="ChEBI" id="CHEBI:15378"/>
        <dbReference type="ChEBI" id="CHEBI:57455"/>
        <dbReference type="ChEBI" id="CHEBI:195366"/>
        <dbReference type="EC" id="3.5.4.9"/>
    </reaction>
</comment>
<comment type="pathway">
    <text evidence="1">One-carbon metabolism; tetrahydrofolate interconversion.</text>
</comment>
<comment type="subunit">
    <text evidence="1">Homodimer.</text>
</comment>
<comment type="similarity">
    <text evidence="1">Belongs to the tetrahydrofolate dehydrogenase/cyclohydrolase family.</text>
</comment>
<protein>
    <recommendedName>
        <fullName evidence="1">Bifunctional protein FolD</fullName>
    </recommendedName>
    <domain>
        <recommendedName>
            <fullName evidence="1">Methylenetetrahydrofolate dehydrogenase</fullName>
            <ecNumber evidence="1">1.5.1.5</ecNumber>
        </recommendedName>
    </domain>
    <domain>
        <recommendedName>
            <fullName evidence="1">Methenyltetrahydrofolate cyclohydrolase</fullName>
            <ecNumber evidence="1">3.5.4.9</ecNumber>
        </recommendedName>
    </domain>
</protein>
<dbReference type="EC" id="1.5.1.5" evidence="1"/>
<dbReference type="EC" id="3.5.4.9" evidence="1"/>
<dbReference type="EMBL" id="AL591978">
    <property type="protein sequence ID" value="CAC99438.1"/>
    <property type="molecule type" value="Genomic_DNA"/>
</dbReference>
<dbReference type="PIR" id="AH1244">
    <property type="entry name" value="AH1244"/>
</dbReference>
<dbReference type="RefSeq" id="NP_464885.1">
    <property type="nucleotide sequence ID" value="NC_003210.1"/>
</dbReference>
<dbReference type="RefSeq" id="WP_003722487.1">
    <property type="nucleotide sequence ID" value="NZ_CP149495.1"/>
</dbReference>
<dbReference type="SMR" id="Q8Y7C5"/>
<dbReference type="STRING" id="169963.gene:17594017"/>
<dbReference type="PaxDb" id="169963-lmo1360"/>
<dbReference type="EnsemblBacteria" id="CAC99438">
    <property type="protein sequence ID" value="CAC99438"/>
    <property type="gene ID" value="CAC99438"/>
</dbReference>
<dbReference type="GeneID" id="987879"/>
<dbReference type="KEGG" id="lmo:lmo1360"/>
<dbReference type="PATRIC" id="fig|169963.11.peg.1397"/>
<dbReference type="eggNOG" id="COG0190">
    <property type="taxonomic scope" value="Bacteria"/>
</dbReference>
<dbReference type="HOGENOM" id="CLU_034045_2_1_9"/>
<dbReference type="OrthoDB" id="9803580at2"/>
<dbReference type="PhylomeDB" id="Q8Y7C5"/>
<dbReference type="BioCyc" id="LMON169963:LMO1360-MONOMER"/>
<dbReference type="UniPathway" id="UPA00193"/>
<dbReference type="Proteomes" id="UP000000817">
    <property type="component" value="Chromosome"/>
</dbReference>
<dbReference type="GO" id="GO:0005829">
    <property type="term" value="C:cytosol"/>
    <property type="evidence" value="ECO:0000318"/>
    <property type="project" value="GO_Central"/>
</dbReference>
<dbReference type="GO" id="GO:0004477">
    <property type="term" value="F:methenyltetrahydrofolate cyclohydrolase activity"/>
    <property type="evidence" value="ECO:0000318"/>
    <property type="project" value="GO_Central"/>
</dbReference>
<dbReference type="GO" id="GO:0004488">
    <property type="term" value="F:methylenetetrahydrofolate dehydrogenase (NADP+) activity"/>
    <property type="evidence" value="ECO:0000318"/>
    <property type="project" value="GO_Central"/>
</dbReference>
<dbReference type="GO" id="GO:0000105">
    <property type="term" value="P:L-histidine biosynthetic process"/>
    <property type="evidence" value="ECO:0007669"/>
    <property type="project" value="UniProtKB-KW"/>
</dbReference>
<dbReference type="GO" id="GO:0009086">
    <property type="term" value="P:methionine biosynthetic process"/>
    <property type="evidence" value="ECO:0007669"/>
    <property type="project" value="UniProtKB-KW"/>
</dbReference>
<dbReference type="GO" id="GO:0006164">
    <property type="term" value="P:purine nucleotide biosynthetic process"/>
    <property type="evidence" value="ECO:0007669"/>
    <property type="project" value="UniProtKB-KW"/>
</dbReference>
<dbReference type="GO" id="GO:0035999">
    <property type="term" value="P:tetrahydrofolate interconversion"/>
    <property type="evidence" value="ECO:0000318"/>
    <property type="project" value="GO_Central"/>
</dbReference>
<dbReference type="CDD" id="cd01080">
    <property type="entry name" value="NAD_bind_m-THF_DH_Cyclohyd"/>
    <property type="match status" value="1"/>
</dbReference>
<dbReference type="FunFam" id="3.40.50.10860:FF:000001">
    <property type="entry name" value="Bifunctional protein FolD"/>
    <property type="match status" value="1"/>
</dbReference>
<dbReference type="FunFam" id="3.40.50.720:FF:000094">
    <property type="entry name" value="Bifunctional protein FolD"/>
    <property type="match status" value="1"/>
</dbReference>
<dbReference type="Gene3D" id="3.40.50.10860">
    <property type="entry name" value="Leucine Dehydrogenase, chain A, domain 1"/>
    <property type="match status" value="1"/>
</dbReference>
<dbReference type="Gene3D" id="3.40.50.720">
    <property type="entry name" value="NAD(P)-binding Rossmann-like Domain"/>
    <property type="match status" value="1"/>
</dbReference>
<dbReference type="HAMAP" id="MF_01576">
    <property type="entry name" value="THF_DHG_CYH"/>
    <property type="match status" value="1"/>
</dbReference>
<dbReference type="InterPro" id="IPR046346">
    <property type="entry name" value="Aminoacid_DH-like_N_sf"/>
</dbReference>
<dbReference type="InterPro" id="IPR036291">
    <property type="entry name" value="NAD(P)-bd_dom_sf"/>
</dbReference>
<dbReference type="InterPro" id="IPR000672">
    <property type="entry name" value="THF_DH/CycHdrlase"/>
</dbReference>
<dbReference type="InterPro" id="IPR020630">
    <property type="entry name" value="THF_DH/CycHdrlase_cat_dom"/>
</dbReference>
<dbReference type="InterPro" id="IPR020867">
    <property type="entry name" value="THF_DH/CycHdrlase_CS"/>
</dbReference>
<dbReference type="InterPro" id="IPR020631">
    <property type="entry name" value="THF_DH/CycHdrlase_NAD-bd_dom"/>
</dbReference>
<dbReference type="NCBIfam" id="NF008058">
    <property type="entry name" value="PRK10792.1"/>
    <property type="match status" value="1"/>
</dbReference>
<dbReference type="NCBIfam" id="NF010767">
    <property type="entry name" value="PRK14170.1"/>
    <property type="match status" value="1"/>
</dbReference>
<dbReference type="NCBIfam" id="NF010783">
    <property type="entry name" value="PRK14186.1"/>
    <property type="match status" value="1"/>
</dbReference>
<dbReference type="NCBIfam" id="NF010785">
    <property type="entry name" value="PRK14188.1"/>
    <property type="match status" value="1"/>
</dbReference>
<dbReference type="PANTHER" id="PTHR48099:SF5">
    <property type="entry name" value="C-1-TETRAHYDROFOLATE SYNTHASE, CYTOPLASMIC"/>
    <property type="match status" value="1"/>
</dbReference>
<dbReference type="PANTHER" id="PTHR48099">
    <property type="entry name" value="C-1-TETRAHYDROFOLATE SYNTHASE, CYTOPLASMIC-RELATED"/>
    <property type="match status" value="1"/>
</dbReference>
<dbReference type="Pfam" id="PF00763">
    <property type="entry name" value="THF_DHG_CYH"/>
    <property type="match status" value="1"/>
</dbReference>
<dbReference type="Pfam" id="PF02882">
    <property type="entry name" value="THF_DHG_CYH_C"/>
    <property type="match status" value="1"/>
</dbReference>
<dbReference type="PRINTS" id="PR00085">
    <property type="entry name" value="THFDHDRGNASE"/>
</dbReference>
<dbReference type="SUPFAM" id="SSF53223">
    <property type="entry name" value="Aminoacid dehydrogenase-like, N-terminal domain"/>
    <property type="match status" value="1"/>
</dbReference>
<dbReference type="SUPFAM" id="SSF51735">
    <property type="entry name" value="NAD(P)-binding Rossmann-fold domains"/>
    <property type="match status" value="1"/>
</dbReference>
<dbReference type="PROSITE" id="PS00766">
    <property type="entry name" value="THF_DHG_CYH_1"/>
    <property type="match status" value="1"/>
</dbReference>
<dbReference type="PROSITE" id="PS00767">
    <property type="entry name" value="THF_DHG_CYH_2"/>
    <property type="match status" value="1"/>
</dbReference>
<keyword id="KW-0028">Amino-acid biosynthesis</keyword>
<keyword id="KW-0368">Histidine biosynthesis</keyword>
<keyword id="KW-0378">Hydrolase</keyword>
<keyword id="KW-0486">Methionine biosynthesis</keyword>
<keyword id="KW-0511">Multifunctional enzyme</keyword>
<keyword id="KW-0521">NADP</keyword>
<keyword id="KW-0554">One-carbon metabolism</keyword>
<keyword id="KW-0560">Oxidoreductase</keyword>
<keyword id="KW-0658">Purine biosynthesis</keyword>
<keyword id="KW-1185">Reference proteome</keyword>
<organism>
    <name type="scientific">Listeria monocytogenes serovar 1/2a (strain ATCC BAA-679 / EGD-e)</name>
    <dbReference type="NCBI Taxonomy" id="169963"/>
    <lineage>
        <taxon>Bacteria</taxon>
        <taxon>Bacillati</taxon>
        <taxon>Bacillota</taxon>
        <taxon>Bacilli</taxon>
        <taxon>Bacillales</taxon>
        <taxon>Listeriaceae</taxon>
        <taxon>Listeria</taxon>
    </lineage>
</organism>
<name>FOLD_LISMO</name>